<protein>
    <recommendedName>
        <fullName>Ovomucoid</fullName>
    </recommendedName>
</protein>
<dbReference type="PIR" id="D31438">
    <property type="entry name" value="D31438"/>
</dbReference>
<dbReference type="SMR" id="P68146"/>
<dbReference type="GO" id="GO:0005576">
    <property type="term" value="C:extracellular region"/>
    <property type="evidence" value="ECO:0007669"/>
    <property type="project" value="UniProtKB-SubCell"/>
</dbReference>
<dbReference type="GO" id="GO:0004867">
    <property type="term" value="F:serine-type endopeptidase inhibitor activity"/>
    <property type="evidence" value="ECO:0007669"/>
    <property type="project" value="UniProtKB-KW"/>
</dbReference>
<dbReference type="CDD" id="cd00104">
    <property type="entry name" value="KAZAL_FS"/>
    <property type="match status" value="1"/>
</dbReference>
<dbReference type="FunFam" id="3.30.60.30:FF:000037">
    <property type="entry name" value="Ovomucoid"/>
    <property type="match status" value="1"/>
</dbReference>
<dbReference type="Gene3D" id="3.30.60.30">
    <property type="match status" value="1"/>
</dbReference>
<dbReference type="InterPro" id="IPR051597">
    <property type="entry name" value="Bifunctional_prot_inhibitor"/>
</dbReference>
<dbReference type="InterPro" id="IPR002350">
    <property type="entry name" value="Kazal_dom"/>
</dbReference>
<dbReference type="InterPro" id="IPR036058">
    <property type="entry name" value="Kazal_dom_sf"/>
</dbReference>
<dbReference type="InterPro" id="IPR001239">
    <property type="entry name" value="Prot_inh_Kazal-m"/>
</dbReference>
<dbReference type="PANTHER" id="PTHR47729:SF1">
    <property type="entry name" value="OVOMUCOID-LIKE-RELATED"/>
    <property type="match status" value="1"/>
</dbReference>
<dbReference type="PANTHER" id="PTHR47729">
    <property type="entry name" value="SERINE PEPTIDASE INHIBITOR, KAZAL TYPE 2, TANDEM DUPLICATE 1-RELATED"/>
    <property type="match status" value="1"/>
</dbReference>
<dbReference type="Pfam" id="PF00050">
    <property type="entry name" value="Kazal_1"/>
    <property type="match status" value="1"/>
</dbReference>
<dbReference type="PRINTS" id="PR00290">
    <property type="entry name" value="KAZALINHBTR"/>
</dbReference>
<dbReference type="SMART" id="SM00280">
    <property type="entry name" value="KAZAL"/>
    <property type="match status" value="1"/>
</dbReference>
<dbReference type="SUPFAM" id="SSF100895">
    <property type="entry name" value="Kazal-type serine protease inhibitors"/>
    <property type="match status" value="1"/>
</dbReference>
<dbReference type="PROSITE" id="PS00282">
    <property type="entry name" value="KAZAL_1"/>
    <property type="match status" value="1"/>
</dbReference>
<dbReference type="PROSITE" id="PS51465">
    <property type="entry name" value="KAZAL_2"/>
    <property type="match status" value="1"/>
</dbReference>
<reference key="1">
    <citation type="journal article" date="1987" name="Biochemistry">
        <title>Ovomucoid third domains from 100 avian species: isolation, sequences, and hypervariability of enzyme-inhibitor contact residues.</title>
        <authorList>
            <person name="Laskowski M. Jr."/>
            <person name="Kato I."/>
            <person name="Ardelt W."/>
            <person name="Cook J."/>
            <person name="Denton A."/>
            <person name="Empie M.W."/>
            <person name="Kohr W.J."/>
            <person name="Park S.J."/>
            <person name="Parks K."/>
            <person name="Schatzley B.L."/>
            <person name="Schoenberger O.L."/>
            <person name="Tashiro M."/>
            <person name="Vichot G."/>
            <person name="Whatley H.E."/>
            <person name="Wieczorek A."/>
            <person name="Wieczorek M."/>
        </authorList>
    </citation>
    <scope>PROTEIN SEQUENCE</scope>
</reference>
<proteinExistence type="evidence at protein level"/>
<comment type="subcellular location">
    <subcellularLocation>
        <location>Secreted</location>
    </subcellularLocation>
</comment>
<comment type="domain">
    <text>Avian ovomucoid consists of three homologous, tandem Kazal family inhibitory domains.</text>
</comment>
<evidence type="ECO:0000255" key="1">
    <source>
        <dbReference type="PROSITE-ProRule" id="PRU00798"/>
    </source>
</evidence>
<sequence length="54" mass="5808">LAAVDCSEYPKPACTLEYRPLCGSDSKTYGNKCNFCNAVVESNGTLTLSHFGKC</sequence>
<accession>P68146</accession>
<accession>P05593</accession>
<name>IOVO_ALECH</name>
<organism>
    <name type="scientific">Alectoris chukar</name>
    <name type="common">Chukar partridge</name>
    <name type="synonym">Perdix chukar</name>
    <dbReference type="NCBI Taxonomy" id="9078"/>
    <lineage>
        <taxon>Eukaryota</taxon>
        <taxon>Metazoa</taxon>
        <taxon>Chordata</taxon>
        <taxon>Craniata</taxon>
        <taxon>Vertebrata</taxon>
        <taxon>Euteleostomi</taxon>
        <taxon>Archelosauria</taxon>
        <taxon>Archosauria</taxon>
        <taxon>Dinosauria</taxon>
        <taxon>Saurischia</taxon>
        <taxon>Theropoda</taxon>
        <taxon>Coelurosauria</taxon>
        <taxon>Aves</taxon>
        <taxon>Neognathae</taxon>
        <taxon>Galloanserae</taxon>
        <taxon>Galliformes</taxon>
        <taxon>Phasianidae</taxon>
        <taxon>Perdicinae</taxon>
        <taxon>Alectoris</taxon>
    </lineage>
</organism>
<feature type="chain" id="PRO_0000073052" description="Ovomucoid">
    <location>
        <begin position="1" status="less than"/>
        <end position="54" status="greater than"/>
    </location>
</feature>
<feature type="domain" description="Kazal-like" evidence="1">
    <location>
        <begin position="4"/>
        <end position="54"/>
    </location>
</feature>
<feature type="site" description="Reactive bond 3">
    <location>
        <begin position="16"/>
        <end position="17"/>
    </location>
</feature>
<feature type="glycosylation site" description="N-linked (GlcNAc...) asparagine">
    <location>
        <position position="43"/>
    </location>
</feature>
<feature type="disulfide bond">
    <location>
        <begin position="6"/>
        <end position="36"/>
    </location>
</feature>
<feature type="disulfide bond">
    <location>
        <begin position="14"/>
        <end position="33"/>
    </location>
</feature>
<feature type="disulfide bond">
    <location>
        <begin position="22"/>
        <end position="54"/>
    </location>
</feature>
<feature type="non-terminal residue">
    <location>
        <position position="1"/>
    </location>
</feature>
<feature type="non-terminal residue">
    <location>
        <position position="54"/>
    </location>
</feature>
<keyword id="KW-0903">Direct protein sequencing</keyword>
<keyword id="KW-1015">Disulfide bond</keyword>
<keyword id="KW-0325">Glycoprotein</keyword>
<keyword id="KW-0646">Protease inhibitor</keyword>
<keyword id="KW-0677">Repeat</keyword>
<keyword id="KW-0964">Secreted</keyword>
<keyword id="KW-0722">Serine protease inhibitor</keyword>